<sequence>MARYTGPITRKSRRLRVDLVGGDQAFERRPYPPGQHGRARIKESEYLLQLQEKQKARFTYGVMEKQFRLYYKEANNRPGKTGENLLRILESRLDNVVYRAGLARTRRQARQLVTHGHLLVNNKKVDIPSYRVSQYDIIDVKEKSLSTLPFQVARETVGDRPVPGWLQVVGSRLRILVHQLPERAQIDIALQEQLIVEYYSK</sequence>
<name>RS4_RHOE4</name>
<evidence type="ECO:0000255" key="1">
    <source>
        <dbReference type="HAMAP-Rule" id="MF_01306"/>
    </source>
</evidence>
<evidence type="ECO:0000305" key="2"/>
<reference key="1">
    <citation type="submission" date="2005-03" db="EMBL/GenBank/DDBJ databases">
        <title>Comparison of the complete genome sequences of Rhodococcus erythropolis PR4 and Rhodococcus opacus B4.</title>
        <authorList>
            <person name="Takarada H."/>
            <person name="Sekine M."/>
            <person name="Hosoyama A."/>
            <person name="Yamada R."/>
            <person name="Fujisawa T."/>
            <person name="Omata S."/>
            <person name="Shimizu A."/>
            <person name="Tsukatani N."/>
            <person name="Tanikawa S."/>
            <person name="Fujita N."/>
            <person name="Harayama S."/>
        </authorList>
    </citation>
    <scope>NUCLEOTIDE SEQUENCE [LARGE SCALE GENOMIC DNA]</scope>
    <source>
        <strain>PR4 / NBRC 100887</strain>
    </source>
</reference>
<dbReference type="EMBL" id="AP008957">
    <property type="protein sequence ID" value="BAH32588.1"/>
    <property type="molecule type" value="Genomic_DNA"/>
</dbReference>
<dbReference type="RefSeq" id="WP_003940769.1">
    <property type="nucleotide sequence ID" value="NC_012490.1"/>
</dbReference>
<dbReference type="SMR" id="C0ZW53"/>
<dbReference type="GeneID" id="93803277"/>
<dbReference type="KEGG" id="rer:RER_18800"/>
<dbReference type="eggNOG" id="COG0522">
    <property type="taxonomic scope" value="Bacteria"/>
</dbReference>
<dbReference type="HOGENOM" id="CLU_092403_0_2_11"/>
<dbReference type="Proteomes" id="UP000002204">
    <property type="component" value="Chromosome"/>
</dbReference>
<dbReference type="GO" id="GO:0015935">
    <property type="term" value="C:small ribosomal subunit"/>
    <property type="evidence" value="ECO:0007669"/>
    <property type="project" value="InterPro"/>
</dbReference>
<dbReference type="GO" id="GO:0019843">
    <property type="term" value="F:rRNA binding"/>
    <property type="evidence" value="ECO:0007669"/>
    <property type="project" value="UniProtKB-UniRule"/>
</dbReference>
<dbReference type="GO" id="GO:0003735">
    <property type="term" value="F:structural constituent of ribosome"/>
    <property type="evidence" value="ECO:0007669"/>
    <property type="project" value="InterPro"/>
</dbReference>
<dbReference type="GO" id="GO:0042274">
    <property type="term" value="P:ribosomal small subunit biogenesis"/>
    <property type="evidence" value="ECO:0007669"/>
    <property type="project" value="TreeGrafter"/>
</dbReference>
<dbReference type="GO" id="GO:0006412">
    <property type="term" value="P:translation"/>
    <property type="evidence" value="ECO:0007669"/>
    <property type="project" value="UniProtKB-UniRule"/>
</dbReference>
<dbReference type="CDD" id="cd00165">
    <property type="entry name" value="S4"/>
    <property type="match status" value="1"/>
</dbReference>
<dbReference type="FunFam" id="3.10.290.10:FF:000001">
    <property type="entry name" value="30S ribosomal protein S4"/>
    <property type="match status" value="1"/>
</dbReference>
<dbReference type="Gene3D" id="1.10.1050.10">
    <property type="entry name" value="Ribosomal Protein S4 Delta 41, Chain A, domain 1"/>
    <property type="match status" value="1"/>
</dbReference>
<dbReference type="Gene3D" id="3.10.290.10">
    <property type="entry name" value="RNA-binding S4 domain"/>
    <property type="match status" value="1"/>
</dbReference>
<dbReference type="HAMAP" id="MF_01306_B">
    <property type="entry name" value="Ribosomal_uS4_B"/>
    <property type="match status" value="1"/>
</dbReference>
<dbReference type="InterPro" id="IPR022801">
    <property type="entry name" value="Ribosomal_uS4"/>
</dbReference>
<dbReference type="InterPro" id="IPR005709">
    <property type="entry name" value="Ribosomal_uS4_bac-type"/>
</dbReference>
<dbReference type="InterPro" id="IPR018079">
    <property type="entry name" value="Ribosomal_uS4_CS"/>
</dbReference>
<dbReference type="InterPro" id="IPR001912">
    <property type="entry name" value="Ribosomal_uS4_N"/>
</dbReference>
<dbReference type="InterPro" id="IPR002942">
    <property type="entry name" value="S4_RNA-bd"/>
</dbReference>
<dbReference type="InterPro" id="IPR036986">
    <property type="entry name" value="S4_RNA-bd_sf"/>
</dbReference>
<dbReference type="NCBIfam" id="NF003717">
    <property type="entry name" value="PRK05327.1"/>
    <property type="match status" value="1"/>
</dbReference>
<dbReference type="NCBIfam" id="TIGR01017">
    <property type="entry name" value="rpsD_bact"/>
    <property type="match status" value="1"/>
</dbReference>
<dbReference type="PANTHER" id="PTHR11831">
    <property type="entry name" value="30S 40S RIBOSOMAL PROTEIN"/>
    <property type="match status" value="1"/>
</dbReference>
<dbReference type="PANTHER" id="PTHR11831:SF4">
    <property type="entry name" value="SMALL RIBOSOMAL SUBUNIT PROTEIN US4M"/>
    <property type="match status" value="1"/>
</dbReference>
<dbReference type="Pfam" id="PF00163">
    <property type="entry name" value="Ribosomal_S4"/>
    <property type="match status" value="1"/>
</dbReference>
<dbReference type="Pfam" id="PF01479">
    <property type="entry name" value="S4"/>
    <property type="match status" value="1"/>
</dbReference>
<dbReference type="SMART" id="SM01390">
    <property type="entry name" value="Ribosomal_S4"/>
    <property type="match status" value="1"/>
</dbReference>
<dbReference type="SMART" id="SM00363">
    <property type="entry name" value="S4"/>
    <property type="match status" value="1"/>
</dbReference>
<dbReference type="SUPFAM" id="SSF55174">
    <property type="entry name" value="Alpha-L RNA-binding motif"/>
    <property type="match status" value="1"/>
</dbReference>
<dbReference type="PROSITE" id="PS00632">
    <property type="entry name" value="RIBOSOMAL_S4"/>
    <property type="match status" value="1"/>
</dbReference>
<dbReference type="PROSITE" id="PS50889">
    <property type="entry name" value="S4"/>
    <property type="match status" value="1"/>
</dbReference>
<organism>
    <name type="scientific">Rhodococcus erythropolis (strain PR4 / NBRC 100887)</name>
    <dbReference type="NCBI Taxonomy" id="234621"/>
    <lineage>
        <taxon>Bacteria</taxon>
        <taxon>Bacillati</taxon>
        <taxon>Actinomycetota</taxon>
        <taxon>Actinomycetes</taxon>
        <taxon>Mycobacteriales</taxon>
        <taxon>Nocardiaceae</taxon>
        <taxon>Rhodococcus</taxon>
        <taxon>Rhodococcus erythropolis group</taxon>
    </lineage>
</organism>
<gene>
    <name evidence="1" type="primary">rpsD</name>
    <name type="ordered locus">RER_18800</name>
</gene>
<proteinExistence type="inferred from homology"/>
<feature type="chain" id="PRO_1000214299" description="Small ribosomal subunit protein uS4">
    <location>
        <begin position="1"/>
        <end position="201"/>
    </location>
</feature>
<feature type="domain" description="S4 RNA-binding" evidence="1">
    <location>
        <begin position="91"/>
        <end position="157"/>
    </location>
</feature>
<comment type="function">
    <text evidence="1">One of the primary rRNA binding proteins, it binds directly to 16S rRNA where it nucleates assembly of the body of the 30S subunit.</text>
</comment>
<comment type="function">
    <text evidence="1">With S5 and S12 plays an important role in translational accuracy.</text>
</comment>
<comment type="subunit">
    <text evidence="1">Part of the 30S ribosomal subunit. Contacts protein S5. The interaction surface between S4 and S5 is involved in control of translational fidelity.</text>
</comment>
<comment type="similarity">
    <text evidence="1">Belongs to the universal ribosomal protein uS4 family.</text>
</comment>
<keyword id="KW-0687">Ribonucleoprotein</keyword>
<keyword id="KW-0689">Ribosomal protein</keyword>
<keyword id="KW-0694">RNA-binding</keyword>
<keyword id="KW-0699">rRNA-binding</keyword>
<protein>
    <recommendedName>
        <fullName evidence="1">Small ribosomal subunit protein uS4</fullName>
    </recommendedName>
    <alternativeName>
        <fullName evidence="2">30S ribosomal protein S4</fullName>
    </alternativeName>
</protein>
<accession>C0ZW53</accession>